<protein>
    <recommendedName>
        <fullName evidence="5">Auxilin-related protein 1</fullName>
    </recommendedName>
    <alternativeName>
        <fullName evidence="4">Auxilin-like protein 1</fullName>
    </alternativeName>
</protein>
<comment type="function">
    <text evidence="3">Promotes uncoating of clathrin-coated vesicles. May interact directly with clathrin.</text>
</comment>
<comment type="subunit">
    <text evidence="3">Interacts with SH3P1.</text>
</comment>
<comment type="subcellular location">
    <subcellularLocation>
        <location evidence="3">Cell membrane</location>
        <topology evidence="3">Peripheral membrane protein</topology>
    </subcellularLocation>
    <subcellularLocation>
        <location evidence="3">Golgi apparatus</location>
        <location evidence="3">trans-Golgi network</location>
    </subcellularLocation>
    <subcellularLocation>
        <location evidence="3">Endoplasmic reticulum</location>
    </subcellularLocation>
    <subcellularLocation>
        <location evidence="3">Cytoplasmic vesicle</location>
    </subcellularLocation>
</comment>
<comment type="alternative products">
    <event type="alternative splicing"/>
    <isoform>
        <id>Q9SU08-1</id>
        <name>1</name>
        <sequence type="displayed"/>
    </isoform>
    <text>A number of isoforms are produced. According to EST sequences.</text>
</comment>
<comment type="sequence caution" evidence="5">
    <conflict type="erroneous initiation">
        <sequence resource="EMBL-CDS" id="AAL91223"/>
    </conflict>
    <text>Truncated N-terminus.</text>
</comment>
<comment type="sequence caution" evidence="5">
    <conflict type="erroneous gene model prediction">
        <sequence resource="EMBL-CDS" id="CAB40995"/>
    </conflict>
</comment>
<comment type="sequence caution" evidence="5">
    <conflict type="erroneous gene model prediction">
        <sequence resource="EMBL-CDS" id="CAB78320"/>
    </conflict>
</comment>
<keyword id="KW-0025">Alternative splicing</keyword>
<keyword id="KW-1003">Cell membrane</keyword>
<keyword id="KW-0143">Chaperone</keyword>
<keyword id="KW-0175">Coiled coil</keyword>
<keyword id="KW-0968">Cytoplasmic vesicle</keyword>
<keyword id="KW-0256">Endoplasmic reticulum</keyword>
<keyword id="KW-0333">Golgi apparatus</keyword>
<keyword id="KW-0472">Membrane</keyword>
<keyword id="KW-1185">Reference proteome</keyword>
<name>AUXI1_ARATH</name>
<feature type="chain" id="PRO_0000395459" description="Auxilin-related protein 1">
    <location>
        <begin position="1"/>
        <end position="904"/>
    </location>
</feature>
<feature type="domain" description="R">
    <location>
        <begin position="619"/>
        <end position="640"/>
    </location>
</feature>
<feature type="domain" description="J">
    <location>
        <begin position="839"/>
        <end position="904"/>
    </location>
</feature>
<feature type="region of interest" description="Disordered" evidence="2">
    <location>
        <begin position="46"/>
        <end position="99"/>
    </location>
</feature>
<feature type="region of interest" description="Disordered" evidence="2">
    <location>
        <begin position="150"/>
        <end position="731"/>
    </location>
</feature>
<feature type="region of interest" description="Disordered" evidence="2">
    <location>
        <begin position="749"/>
        <end position="776"/>
    </location>
</feature>
<feature type="coiled-coil region" evidence="1">
    <location>
        <begin position="456"/>
        <end position="663"/>
    </location>
</feature>
<feature type="coiled-coil region" evidence="1">
    <location>
        <begin position="762"/>
        <end position="804"/>
    </location>
</feature>
<feature type="compositionally biased region" description="Basic and acidic residues" evidence="2">
    <location>
        <begin position="59"/>
        <end position="69"/>
    </location>
</feature>
<feature type="compositionally biased region" description="Low complexity" evidence="2">
    <location>
        <begin position="81"/>
        <end position="95"/>
    </location>
</feature>
<feature type="compositionally biased region" description="Basic and acidic residues" evidence="2">
    <location>
        <begin position="178"/>
        <end position="188"/>
    </location>
</feature>
<feature type="compositionally biased region" description="Low complexity" evidence="2">
    <location>
        <begin position="201"/>
        <end position="215"/>
    </location>
</feature>
<feature type="compositionally biased region" description="Acidic residues" evidence="2">
    <location>
        <begin position="232"/>
        <end position="244"/>
    </location>
</feature>
<feature type="compositionally biased region" description="Basic and acidic residues" evidence="2">
    <location>
        <begin position="245"/>
        <end position="271"/>
    </location>
</feature>
<feature type="compositionally biased region" description="Pro residues" evidence="2">
    <location>
        <begin position="370"/>
        <end position="383"/>
    </location>
</feature>
<feature type="compositionally biased region" description="Polar residues" evidence="2">
    <location>
        <begin position="394"/>
        <end position="419"/>
    </location>
</feature>
<feature type="compositionally biased region" description="Basic and acidic residues" evidence="2">
    <location>
        <begin position="462"/>
        <end position="570"/>
    </location>
</feature>
<feature type="compositionally biased region" description="Basic and acidic residues" evidence="2">
    <location>
        <begin position="581"/>
        <end position="660"/>
    </location>
</feature>
<feature type="compositionally biased region" description="Low complexity" evidence="2">
    <location>
        <begin position="661"/>
        <end position="673"/>
    </location>
</feature>
<feature type="compositionally biased region" description="Polar residues" evidence="2">
    <location>
        <begin position="674"/>
        <end position="697"/>
    </location>
</feature>
<feature type="compositionally biased region" description="Basic and acidic residues" evidence="2">
    <location>
        <begin position="764"/>
        <end position="776"/>
    </location>
</feature>
<evidence type="ECO:0000255" key="1"/>
<evidence type="ECO:0000256" key="2">
    <source>
        <dbReference type="SAM" id="MobiDB-lite"/>
    </source>
</evidence>
<evidence type="ECO:0000269" key="3">
    <source>
    </source>
</evidence>
<evidence type="ECO:0000303" key="4">
    <source>
    </source>
</evidence>
<evidence type="ECO:0000305" key="5"/>
<evidence type="ECO:0000312" key="6">
    <source>
        <dbReference type="Araport" id="AT4G12780"/>
    </source>
</evidence>
<evidence type="ECO:0000312" key="7">
    <source>
        <dbReference type="EMBL" id="CAB40995.1"/>
    </source>
</evidence>
<reference key="1">
    <citation type="journal article" date="1999" name="Nature">
        <title>Sequence and analysis of chromosome 4 of the plant Arabidopsis thaliana.</title>
        <authorList>
            <person name="Mayer K.F.X."/>
            <person name="Schueller C."/>
            <person name="Wambutt R."/>
            <person name="Murphy G."/>
            <person name="Volckaert G."/>
            <person name="Pohl T."/>
            <person name="Duesterhoeft A."/>
            <person name="Stiekema W."/>
            <person name="Entian K.-D."/>
            <person name="Terryn N."/>
            <person name="Harris B."/>
            <person name="Ansorge W."/>
            <person name="Brandt P."/>
            <person name="Grivell L.A."/>
            <person name="Rieger M."/>
            <person name="Weichselgartner M."/>
            <person name="de Simone V."/>
            <person name="Obermaier B."/>
            <person name="Mache R."/>
            <person name="Mueller M."/>
            <person name="Kreis M."/>
            <person name="Delseny M."/>
            <person name="Puigdomenech P."/>
            <person name="Watson M."/>
            <person name="Schmidtheini T."/>
            <person name="Reichert B."/>
            <person name="Portetelle D."/>
            <person name="Perez-Alonso M."/>
            <person name="Boutry M."/>
            <person name="Bancroft I."/>
            <person name="Vos P."/>
            <person name="Hoheisel J."/>
            <person name="Zimmermann W."/>
            <person name="Wedler H."/>
            <person name="Ridley P."/>
            <person name="Langham S.-A."/>
            <person name="McCullagh B."/>
            <person name="Bilham L."/>
            <person name="Robben J."/>
            <person name="van der Schueren J."/>
            <person name="Grymonprez B."/>
            <person name="Chuang Y.-J."/>
            <person name="Vandenbussche F."/>
            <person name="Braeken M."/>
            <person name="Weltjens I."/>
            <person name="Voet M."/>
            <person name="Bastiaens I."/>
            <person name="Aert R."/>
            <person name="Defoor E."/>
            <person name="Weitzenegger T."/>
            <person name="Bothe G."/>
            <person name="Ramsperger U."/>
            <person name="Hilbert H."/>
            <person name="Braun M."/>
            <person name="Holzer E."/>
            <person name="Brandt A."/>
            <person name="Peters S."/>
            <person name="van Staveren M."/>
            <person name="Dirkse W."/>
            <person name="Mooijman P."/>
            <person name="Klein Lankhorst R."/>
            <person name="Rose M."/>
            <person name="Hauf J."/>
            <person name="Koetter P."/>
            <person name="Berneiser S."/>
            <person name="Hempel S."/>
            <person name="Feldpausch M."/>
            <person name="Lamberth S."/>
            <person name="Van den Daele H."/>
            <person name="De Keyser A."/>
            <person name="Buysshaert C."/>
            <person name="Gielen J."/>
            <person name="Villarroel R."/>
            <person name="De Clercq R."/>
            <person name="van Montagu M."/>
            <person name="Rogers J."/>
            <person name="Cronin A."/>
            <person name="Quail M.A."/>
            <person name="Bray-Allen S."/>
            <person name="Clark L."/>
            <person name="Doggett J."/>
            <person name="Hall S."/>
            <person name="Kay M."/>
            <person name="Lennard N."/>
            <person name="McLay K."/>
            <person name="Mayes R."/>
            <person name="Pettett A."/>
            <person name="Rajandream M.A."/>
            <person name="Lyne M."/>
            <person name="Benes V."/>
            <person name="Rechmann S."/>
            <person name="Borkova D."/>
            <person name="Bloecker H."/>
            <person name="Scharfe M."/>
            <person name="Grimm M."/>
            <person name="Loehnert T.-H."/>
            <person name="Dose S."/>
            <person name="de Haan M."/>
            <person name="Maarse A.C."/>
            <person name="Schaefer M."/>
            <person name="Mueller-Auer S."/>
            <person name="Gabel C."/>
            <person name="Fuchs M."/>
            <person name="Fartmann B."/>
            <person name="Granderath K."/>
            <person name="Dauner D."/>
            <person name="Herzl A."/>
            <person name="Neumann S."/>
            <person name="Argiriou A."/>
            <person name="Vitale D."/>
            <person name="Liguori R."/>
            <person name="Piravandi E."/>
            <person name="Massenet O."/>
            <person name="Quigley F."/>
            <person name="Clabauld G."/>
            <person name="Muendlein A."/>
            <person name="Felber R."/>
            <person name="Schnabl S."/>
            <person name="Hiller R."/>
            <person name="Schmidt W."/>
            <person name="Lecharny A."/>
            <person name="Aubourg S."/>
            <person name="Chefdor F."/>
            <person name="Cooke R."/>
            <person name="Berger C."/>
            <person name="Monfort A."/>
            <person name="Casacuberta E."/>
            <person name="Gibbons T."/>
            <person name="Weber N."/>
            <person name="Vandenbol M."/>
            <person name="Bargues M."/>
            <person name="Terol J."/>
            <person name="Torres A."/>
            <person name="Perez-Perez A."/>
            <person name="Purnelle B."/>
            <person name="Bent E."/>
            <person name="Johnson S."/>
            <person name="Tacon D."/>
            <person name="Jesse T."/>
            <person name="Heijnen L."/>
            <person name="Schwarz S."/>
            <person name="Scholler P."/>
            <person name="Heber S."/>
            <person name="Francs P."/>
            <person name="Bielke C."/>
            <person name="Frishman D."/>
            <person name="Haase D."/>
            <person name="Lemcke K."/>
            <person name="Mewes H.-W."/>
            <person name="Stocker S."/>
            <person name="Zaccaria P."/>
            <person name="Bevan M."/>
            <person name="Wilson R.K."/>
            <person name="de la Bastide M."/>
            <person name="Habermann K."/>
            <person name="Parnell L."/>
            <person name="Dedhia N."/>
            <person name="Gnoj L."/>
            <person name="Schutz K."/>
            <person name="Huang E."/>
            <person name="Spiegel L."/>
            <person name="Sekhon M."/>
            <person name="Murray J."/>
            <person name="Sheet P."/>
            <person name="Cordes M."/>
            <person name="Abu-Threideh J."/>
            <person name="Stoneking T."/>
            <person name="Kalicki J."/>
            <person name="Graves T."/>
            <person name="Harmon G."/>
            <person name="Edwards J."/>
            <person name="Latreille P."/>
            <person name="Courtney L."/>
            <person name="Cloud J."/>
            <person name="Abbott A."/>
            <person name="Scott K."/>
            <person name="Johnson D."/>
            <person name="Minx P."/>
            <person name="Bentley D."/>
            <person name="Fulton B."/>
            <person name="Miller N."/>
            <person name="Greco T."/>
            <person name="Kemp K."/>
            <person name="Kramer J."/>
            <person name="Fulton L."/>
            <person name="Mardis E."/>
            <person name="Dante M."/>
            <person name="Pepin K."/>
            <person name="Hillier L.W."/>
            <person name="Nelson J."/>
            <person name="Spieth J."/>
            <person name="Ryan E."/>
            <person name="Andrews S."/>
            <person name="Geisel C."/>
            <person name="Layman D."/>
            <person name="Du H."/>
            <person name="Ali J."/>
            <person name="Berghoff A."/>
            <person name="Jones K."/>
            <person name="Drone K."/>
            <person name="Cotton M."/>
            <person name="Joshu C."/>
            <person name="Antonoiu B."/>
            <person name="Zidanic M."/>
            <person name="Strong C."/>
            <person name="Sun H."/>
            <person name="Lamar B."/>
            <person name="Yordan C."/>
            <person name="Ma P."/>
            <person name="Zhong J."/>
            <person name="Preston R."/>
            <person name="Vil D."/>
            <person name="Shekher M."/>
            <person name="Matero A."/>
            <person name="Shah R."/>
            <person name="Swaby I.K."/>
            <person name="O'Shaughnessy A."/>
            <person name="Rodriguez M."/>
            <person name="Hoffman J."/>
            <person name="Till S."/>
            <person name="Granat S."/>
            <person name="Shohdy N."/>
            <person name="Hasegawa A."/>
            <person name="Hameed A."/>
            <person name="Lodhi M."/>
            <person name="Johnson A."/>
            <person name="Chen E."/>
            <person name="Marra M.A."/>
            <person name="Martienssen R."/>
            <person name="McCombie W.R."/>
        </authorList>
    </citation>
    <scope>NUCLEOTIDE SEQUENCE [LARGE SCALE GENOMIC DNA]</scope>
    <source>
        <strain>cv. Columbia</strain>
    </source>
</reference>
<reference key="2">
    <citation type="journal article" date="2017" name="Plant J.">
        <title>Araport11: a complete reannotation of the Arabidopsis thaliana reference genome.</title>
        <authorList>
            <person name="Cheng C.Y."/>
            <person name="Krishnakumar V."/>
            <person name="Chan A.P."/>
            <person name="Thibaud-Nissen F."/>
            <person name="Schobel S."/>
            <person name="Town C.D."/>
        </authorList>
    </citation>
    <scope>GENOME REANNOTATION</scope>
    <source>
        <strain>cv. Columbia</strain>
    </source>
</reference>
<reference key="3">
    <citation type="journal article" date="2003" name="Science">
        <title>Empirical analysis of transcriptional activity in the Arabidopsis genome.</title>
        <authorList>
            <person name="Yamada K."/>
            <person name="Lim J."/>
            <person name="Dale J.M."/>
            <person name="Chen H."/>
            <person name="Shinn P."/>
            <person name="Palm C.J."/>
            <person name="Southwick A.M."/>
            <person name="Wu H.C."/>
            <person name="Kim C.J."/>
            <person name="Nguyen M."/>
            <person name="Pham P.K."/>
            <person name="Cheuk R.F."/>
            <person name="Karlin-Newmann G."/>
            <person name="Liu S.X."/>
            <person name="Lam B."/>
            <person name="Sakano H."/>
            <person name="Wu T."/>
            <person name="Yu G."/>
            <person name="Miranda M."/>
            <person name="Quach H.L."/>
            <person name="Tripp M."/>
            <person name="Chang C.H."/>
            <person name="Lee J.M."/>
            <person name="Toriumi M.J."/>
            <person name="Chan M.M."/>
            <person name="Tang C.C."/>
            <person name="Onodera C.S."/>
            <person name="Deng J.M."/>
            <person name="Akiyama K."/>
            <person name="Ansari Y."/>
            <person name="Arakawa T."/>
            <person name="Banh J."/>
            <person name="Banno F."/>
            <person name="Bowser L."/>
            <person name="Brooks S.Y."/>
            <person name="Carninci P."/>
            <person name="Chao Q."/>
            <person name="Choy N."/>
            <person name="Enju A."/>
            <person name="Goldsmith A.D."/>
            <person name="Gurjal M."/>
            <person name="Hansen N.F."/>
            <person name="Hayashizaki Y."/>
            <person name="Johnson-Hopson C."/>
            <person name="Hsuan V.W."/>
            <person name="Iida K."/>
            <person name="Karnes M."/>
            <person name="Khan S."/>
            <person name="Koesema E."/>
            <person name="Ishida J."/>
            <person name="Jiang P.X."/>
            <person name="Jones T."/>
            <person name="Kawai J."/>
            <person name="Kamiya A."/>
            <person name="Meyers C."/>
            <person name="Nakajima M."/>
            <person name="Narusaka M."/>
            <person name="Seki M."/>
            <person name="Sakurai T."/>
            <person name="Satou M."/>
            <person name="Tamse R."/>
            <person name="Vaysberg M."/>
            <person name="Wallender E.K."/>
            <person name="Wong C."/>
            <person name="Yamamura Y."/>
            <person name="Yuan S."/>
            <person name="Shinozaki K."/>
            <person name="Davis R.W."/>
            <person name="Theologis A."/>
            <person name="Ecker J.R."/>
        </authorList>
    </citation>
    <scope>NUCLEOTIDE SEQUENCE [LARGE SCALE MRNA] OF 397-904</scope>
    <source>
        <strain>cv. Columbia</strain>
    </source>
</reference>
<reference key="4">
    <citation type="journal article" date="2001" name="Plant Cell">
        <title>Role of SH3 domain-containing proteins in clathrin-mediated vesicle trafficking in Arabidopsis.</title>
        <authorList>
            <person name="Lam B.C.-H."/>
            <person name="Sage T.L."/>
            <person name="Bianchi F."/>
            <person name="Blumwald E."/>
        </authorList>
    </citation>
    <scope>INTERACTION WITH SH3P1</scope>
    <scope>FUNCTION</scope>
    <scope>SUBCELLULAR LOCATION</scope>
</reference>
<dbReference type="EMBL" id="AL049640">
    <property type="protein sequence ID" value="CAB40995.1"/>
    <property type="status" value="ALT_SEQ"/>
    <property type="molecule type" value="Genomic_DNA"/>
</dbReference>
<dbReference type="EMBL" id="AL161534">
    <property type="protein sequence ID" value="CAB78320.1"/>
    <property type="status" value="ALT_SEQ"/>
    <property type="molecule type" value="Genomic_DNA"/>
</dbReference>
<dbReference type="EMBL" id="CP002687">
    <property type="protein sequence ID" value="AEE83179.1"/>
    <property type="molecule type" value="Genomic_DNA"/>
</dbReference>
<dbReference type="EMBL" id="AY081334">
    <property type="protein sequence ID" value="AAL91223.1"/>
    <property type="status" value="ALT_INIT"/>
    <property type="molecule type" value="mRNA"/>
</dbReference>
<dbReference type="EMBL" id="BT009679">
    <property type="protein sequence ID" value="AAP81797.1"/>
    <property type="molecule type" value="mRNA"/>
</dbReference>
<dbReference type="PIR" id="T06636">
    <property type="entry name" value="T06636"/>
</dbReference>
<dbReference type="RefSeq" id="NP_193014.5">
    <molecule id="Q9SU08-1"/>
    <property type="nucleotide sequence ID" value="NM_117347.7"/>
</dbReference>
<dbReference type="SMR" id="Q9SU08"/>
<dbReference type="BioGRID" id="12187">
    <property type="interactions" value="4"/>
</dbReference>
<dbReference type="FunCoup" id="Q9SU08">
    <property type="interactions" value="1401"/>
</dbReference>
<dbReference type="STRING" id="3702.Q9SU08"/>
<dbReference type="iPTMnet" id="Q9SU08"/>
<dbReference type="PaxDb" id="3702-AT4G12780.1"/>
<dbReference type="EnsemblPlants" id="AT4G12780.1">
    <molecule id="Q9SU08-1"/>
    <property type="protein sequence ID" value="AT4G12780.1"/>
    <property type="gene ID" value="AT4G12780"/>
</dbReference>
<dbReference type="GeneID" id="826890"/>
<dbReference type="Gramene" id="AT4G12780.1">
    <molecule id="Q9SU08-1"/>
    <property type="protein sequence ID" value="AT4G12780.1"/>
    <property type="gene ID" value="AT4G12780"/>
</dbReference>
<dbReference type="KEGG" id="ath:AT4G12780"/>
<dbReference type="Araport" id="AT4G12780"/>
<dbReference type="TAIR" id="AT4G12780">
    <property type="gene designation" value="AUXILIN-LIKE1"/>
</dbReference>
<dbReference type="eggNOG" id="KOG0431">
    <property type="taxonomic scope" value="Eukaryota"/>
</dbReference>
<dbReference type="InParanoid" id="Q9SU08"/>
<dbReference type="PhylomeDB" id="Q9SU08"/>
<dbReference type="PRO" id="PR:Q9SU08"/>
<dbReference type="Proteomes" id="UP000006548">
    <property type="component" value="Chromosome 4"/>
</dbReference>
<dbReference type="ExpressionAtlas" id="Q9SU08">
    <property type="expression patterns" value="baseline and differential"/>
</dbReference>
<dbReference type="GO" id="GO:0009504">
    <property type="term" value="C:cell plate"/>
    <property type="evidence" value="ECO:0000314"/>
    <property type="project" value="TAIR"/>
</dbReference>
<dbReference type="GO" id="GO:0031410">
    <property type="term" value="C:cytoplasmic vesicle"/>
    <property type="evidence" value="ECO:0007669"/>
    <property type="project" value="UniProtKB-KW"/>
</dbReference>
<dbReference type="GO" id="GO:0005829">
    <property type="term" value="C:cytosol"/>
    <property type="evidence" value="ECO:0000314"/>
    <property type="project" value="TAIR"/>
</dbReference>
<dbReference type="GO" id="GO:0005783">
    <property type="term" value="C:endoplasmic reticulum"/>
    <property type="evidence" value="ECO:0007669"/>
    <property type="project" value="UniProtKB-SubCell"/>
</dbReference>
<dbReference type="GO" id="GO:0005794">
    <property type="term" value="C:Golgi apparatus"/>
    <property type="evidence" value="ECO:0007669"/>
    <property type="project" value="UniProtKB-SubCell"/>
</dbReference>
<dbReference type="GO" id="GO:0005886">
    <property type="term" value="C:plasma membrane"/>
    <property type="evidence" value="ECO:0000314"/>
    <property type="project" value="TAIR"/>
</dbReference>
<dbReference type="GO" id="GO:0072583">
    <property type="term" value="P:clathrin-dependent endocytosis"/>
    <property type="evidence" value="ECO:0000353"/>
    <property type="project" value="TAIR"/>
</dbReference>
<dbReference type="GO" id="GO:1900186">
    <property type="term" value="P:negative regulation of clathrin-dependent endocytosis"/>
    <property type="evidence" value="ECO:0000314"/>
    <property type="project" value="TAIR"/>
</dbReference>
<dbReference type="GO" id="GO:0045806">
    <property type="term" value="P:negative regulation of endocytosis"/>
    <property type="evidence" value="ECO:0000314"/>
    <property type="project" value="TAIR"/>
</dbReference>
<dbReference type="GO" id="GO:0045926">
    <property type="term" value="P:negative regulation of growth"/>
    <property type="evidence" value="ECO:0000314"/>
    <property type="project" value="TAIR"/>
</dbReference>
<dbReference type="FunFam" id="1.10.287.110:FF:000009">
    <property type="entry name" value="Auxilin-related protein 1"/>
    <property type="match status" value="1"/>
</dbReference>
<dbReference type="Gene3D" id="1.10.287.110">
    <property type="entry name" value="DnaJ domain"/>
    <property type="match status" value="1"/>
</dbReference>
<dbReference type="InterPro" id="IPR036869">
    <property type="entry name" value="J_dom_sf"/>
</dbReference>
<dbReference type="PANTHER" id="PTHR23172">
    <property type="entry name" value="AUXILIN/CYCLIN G-ASSOCIATED KINASE-RELATED"/>
    <property type="match status" value="1"/>
</dbReference>
<dbReference type="PANTHER" id="PTHR23172:SF19">
    <property type="entry name" value="J DOMAIN-CONTAINING PROTEIN"/>
    <property type="match status" value="1"/>
</dbReference>
<dbReference type="SUPFAM" id="SSF46565">
    <property type="entry name" value="Chaperone J-domain"/>
    <property type="match status" value="1"/>
</dbReference>
<gene>
    <name evidence="5" type="primary">AUXI1</name>
    <name evidence="6" type="ordered locus">At4g12780</name>
    <name evidence="7" type="ORF">T20K18.130</name>
</gene>
<accession>Q9SU08</accession>
<accession>Q8RXD0</accession>
<sequence length="904" mass="99853">MDDFTGLLARDFGLKPQGKSAPMASQSNSSAADFNTFASSYSFATAAGKKSDSLPVFDDPGRDGDDLLFKDVFSGPPPPKYGSSSGDSRSPSAPAFDYDAMFKEPKSKSASSMPVYDKPVYDDEDVFESIPELKIPSTSSQSARFENVFSSISSSPTKHRKQNSSPFDDLMGNNLGKKGADSDREEKGSSIFDDLIPGFGRTSSPPSKRTTSETTNQSEKAPYRTAETSSNVEEDPFVVLEESESTPREPSRTDPLDDIGKFNSRKTDHSSVHGGVFVDIDPLDNLGKPGPDMNSKGKSHLRPPGNISGSQSPPVESPGSYHSKKVSFEDFLEPHNMSTPPPTNSNGSFESSDDVWLTVSEIPLFTQPTSAPPPTRPPPPRPTRPIKKKVNEPSIPTSAYHSHVPSSGRASVNSPTASQMDELDDFSIGRNQTAANGYPDPSSGEDSDVFSTAAASAAAMKDAMDKAEAKFRHAKERREKENLKASRSREGDHTENYDSRERELREKQVRLDRERAEREAEMEKAQEREKEEREREQKRIERERERLVARQAVERATREARERAATEAHAKVQRAAVGKATDARERAERAAVQRAHAEARERAAAGARDKAAKAAAEAREKAEKAAAEAKERANAEAREKETRVRAERAAVERAAAEARGRAAAQAKAKQQQENTNDLDSFFSSISRPNSAPRQRTNPLDPFQDSWNKGGSFESSRESLRVPPGQPENLRKTSSVTNIVDDLSSIFGASASQSGGFQDVDGETEERRRARLERHQRTQERAAKALAEKNERDLQVQREQVEKDRIGVTLDVEIKRWGAGKEGNLRALLSTLQYVLWPECGWQPVSLTDLITAASVKKVYRKATLCIHPDKVQQKGANLQQKYIAEKVFDMLKEAWNKFNSEELF</sequence>
<proteinExistence type="evidence at protein level"/>
<organism>
    <name type="scientific">Arabidopsis thaliana</name>
    <name type="common">Mouse-ear cress</name>
    <dbReference type="NCBI Taxonomy" id="3702"/>
    <lineage>
        <taxon>Eukaryota</taxon>
        <taxon>Viridiplantae</taxon>
        <taxon>Streptophyta</taxon>
        <taxon>Embryophyta</taxon>
        <taxon>Tracheophyta</taxon>
        <taxon>Spermatophyta</taxon>
        <taxon>Magnoliopsida</taxon>
        <taxon>eudicotyledons</taxon>
        <taxon>Gunneridae</taxon>
        <taxon>Pentapetalae</taxon>
        <taxon>rosids</taxon>
        <taxon>malvids</taxon>
        <taxon>Brassicales</taxon>
        <taxon>Brassicaceae</taxon>
        <taxon>Camelineae</taxon>
        <taxon>Arabidopsis</taxon>
    </lineage>
</organism>